<evidence type="ECO:0000250" key="1">
    <source>
        <dbReference type="UniProtKB" id="Q8GWR0"/>
    </source>
</evidence>
<evidence type="ECO:0000255" key="2"/>
<evidence type="ECO:0000256" key="3">
    <source>
        <dbReference type="SAM" id="MobiDB-lite"/>
    </source>
</evidence>
<evidence type="ECO:0000269" key="4">
    <source>
    </source>
</evidence>
<evidence type="ECO:0000269" key="5">
    <source>
    </source>
</evidence>
<evidence type="ECO:0000269" key="6">
    <source>
    </source>
</evidence>
<evidence type="ECO:0000269" key="7">
    <source>
    </source>
</evidence>
<evidence type="ECO:0000269" key="8">
    <source>
    </source>
</evidence>
<evidence type="ECO:0000303" key="9">
    <source>
    </source>
</evidence>
<evidence type="ECO:0000305" key="10"/>
<evidence type="ECO:0000305" key="11">
    <source>
    </source>
</evidence>
<comment type="function">
    <text evidence="1">Exerts its effect at some terminal stage of cytochrome c oxidase synthesis, probably by being involved in the insertion of the copper B into subunit I.</text>
</comment>
<comment type="subunit">
    <text evidence="5 6">Interacts with CNNM4/ACDP4. Interacts with RANBP2 (PubMed:34400285).</text>
</comment>
<comment type="interaction">
    <interactant intactId="EBI-2963275">
        <id>Q9Y6N1</id>
    </interactant>
    <interactant intactId="EBI-22303661">
        <id>Q9NYJ1</id>
        <label>COA4</label>
    </interactant>
    <organismsDiffer>false</organismsDiffer>
    <experiments>2</experiments>
</comment>
<comment type="subcellular location">
    <subcellularLocation>
        <location evidence="4 8">Mitochondrion inner membrane</location>
        <topology evidence="8">Single-pass membrane protein</topology>
        <orientation evidence="8">Intermembrane side</orientation>
    </subcellularLocation>
</comment>
<comment type="alternative products">
    <event type="alternative splicing"/>
    <isoform>
        <id>Q9Y6N1-1</id>
        <name>1</name>
        <sequence type="displayed"/>
    </isoform>
    <isoform>
        <id>Q9Y6N1-2</id>
        <name>2</name>
        <sequence type="described" ref="VSP_046360"/>
    </isoform>
</comment>
<comment type="tissue specificity">
    <text evidence="8">Ubiquitous.</text>
</comment>
<comment type="disease" evidence="7">
    <disease id="DI-06626">
        <name>Mitochondrial complex IV deficiency, nuclear type 23</name>
        <acronym>MC4DN23</acronym>
        <description>A primary mitochondrial disease, a clinically heterogeneous group of disorders arising from dysfunction of the mitochondrial respiratory chain. MC4DN23 is an autosomal recessive form characterized by infantile-onset encephalopathy. Clinical features include brain atrophy, severe developmental delay, seizures, and dyskinetic movement abnormalities.</description>
        <dbReference type="MIM" id="620275"/>
    </disease>
    <text>The disease may be caused by variants affecting the gene represented in this entry.</text>
</comment>
<comment type="similarity">
    <text evidence="10">Belongs to the COX11/CtaG family.</text>
</comment>
<proteinExistence type="evidence at protein level"/>
<sequence length="276" mass="31430">MGGLWRPGWRCVPFCGWRWIHPGSPTRAAERVEPFLRPEWSGTGGAERGLRWLGTWKRCSLRARHPALQPPRRPKSSNPFTRAQEEERRRQNKTTLTYVAAVAVGMLGASYAAVPLYRLYCQTTGLGGSAVAGHASDKIENMVPVKDRIIKISFNADVHASLQWNFRPQQTEIYVVPGETALAFYRAKNPTDKPVIGISTYNIVPFEAGQYFNKIQCFCFEEQRLNPQEEVDMPVFFYIDPEFAEDPRMIKVDLITLSYTFFEAKEGHKLPVPGYN</sequence>
<name>COX11_HUMAN</name>
<reference key="1">
    <citation type="journal article" date="1998" name="Genomics">
        <title>Identification and characterization of human cDNAs specific to BCS1, PET112, SCO1, COX15, and COX11, five genes involved in the formation and function of the mitochondrial respiratory chain.</title>
        <authorList>
            <person name="Petruzzella V."/>
            <person name="Tiranti V."/>
            <person name="Fernandez P."/>
            <person name="Ianna P."/>
            <person name="Carrozzo R."/>
            <person name="Zeviani M."/>
        </authorList>
    </citation>
    <scope>NUCLEOTIDE SEQUENCE [MRNA] (ISOFORM 1)</scope>
    <scope>SUBCELLULAR LOCATION</scope>
    <scope>TISSUE SPECIFICITY</scope>
</reference>
<reference key="2">
    <citation type="submission" date="2004-06" db="EMBL/GenBank/DDBJ databases">
        <title>Cloning of human full open reading frames in Gateway(TM) system entry vector (pDONR201).</title>
        <authorList>
            <person name="Ebert L."/>
            <person name="Schick M."/>
            <person name="Neubert P."/>
            <person name="Schatten R."/>
            <person name="Henze S."/>
            <person name="Korn B."/>
        </authorList>
    </citation>
    <scope>NUCLEOTIDE SEQUENCE [LARGE SCALE MRNA] (ISOFORM 1)</scope>
</reference>
<reference key="3">
    <citation type="journal article" date="2006" name="Nature">
        <title>DNA sequence of human chromosome 17 and analysis of rearrangement in the human lineage.</title>
        <authorList>
            <person name="Zody M.C."/>
            <person name="Garber M."/>
            <person name="Adams D.J."/>
            <person name="Sharpe T."/>
            <person name="Harrow J."/>
            <person name="Lupski J.R."/>
            <person name="Nicholson C."/>
            <person name="Searle S.M."/>
            <person name="Wilming L."/>
            <person name="Young S.K."/>
            <person name="Abouelleil A."/>
            <person name="Allen N.R."/>
            <person name="Bi W."/>
            <person name="Bloom T."/>
            <person name="Borowsky M.L."/>
            <person name="Bugalter B.E."/>
            <person name="Butler J."/>
            <person name="Chang J.L."/>
            <person name="Chen C.-K."/>
            <person name="Cook A."/>
            <person name="Corum B."/>
            <person name="Cuomo C.A."/>
            <person name="de Jong P.J."/>
            <person name="DeCaprio D."/>
            <person name="Dewar K."/>
            <person name="FitzGerald M."/>
            <person name="Gilbert J."/>
            <person name="Gibson R."/>
            <person name="Gnerre S."/>
            <person name="Goldstein S."/>
            <person name="Grafham D.V."/>
            <person name="Grocock R."/>
            <person name="Hafez N."/>
            <person name="Hagopian D.S."/>
            <person name="Hart E."/>
            <person name="Norman C.H."/>
            <person name="Humphray S."/>
            <person name="Jaffe D.B."/>
            <person name="Jones M."/>
            <person name="Kamal M."/>
            <person name="Khodiyar V.K."/>
            <person name="LaButti K."/>
            <person name="Laird G."/>
            <person name="Lehoczky J."/>
            <person name="Liu X."/>
            <person name="Lokyitsang T."/>
            <person name="Loveland J."/>
            <person name="Lui A."/>
            <person name="Macdonald P."/>
            <person name="Major J.E."/>
            <person name="Matthews L."/>
            <person name="Mauceli E."/>
            <person name="McCarroll S.A."/>
            <person name="Mihalev A.H."/>
            <person name="Mudge J."/>
            <person name="Nguyen C."/>
            <person name="Nicol R."/>
            <person name="O'Leary S.B."/>
            <person name="Osoegawa K."/>
            <person name="Schwartz D.C."/>
            <person name="Shaw-Smith C."/>
            <person name="Stankiewicz P."/>
            <person name="Steward C."/>
            <person name="Swarbreck D."/>
            <person name="Venkataraman V."/>
            <person name="Whittaker C.A."/>
            <person name="Yang X."/>
            <person name="Zimmer A.R."/>
            <person name="Bradley A."/>
            <person name="Hubbard T."/>
            <person name="Birren B.W."/>
            <person name="Rogers J."/>
            <person name="Lander E.S."/>
            <person name="Nusbaum C."/>
        </authorList>
    </citation>
    <scope>NUCLEOTIDE SEQUENCE [LARGE SCALE GENOMIC DNA]</scope>
</reference>
<reference key="4">
    <citation type="submission" date="2005-09" db="EMBL/GenBank/DDBJ databases">
        <authorList>
            <person name="Mural R.J."/>
            <person name="Istrail S."/>
            <person name="Sutton G.G."/>
            <person name="Florea L."/>
            <person name="Halpern A.L."/>
            <person name="Mobarry C.M."/>
            <person name="Lippert R."/>
            <person name="Walenz B."/>
            <person name="Shatkay H."/>
            <person name="Dew I."/>
            <person name="Miller J.R."/>
            <person name="Flanigan M.J."/>
            <person name="Edwards N.J."/>
            <person name="Bolanos R."/>
            <person name="Fasulo D."/>
            <person name="Halldorsson B.V."/>
            <person name="Hannenhalli S."/>
            <person name="Turner R."/>
            <person name="Yooseph S."/>
            <person name="Lu F."/>
            <person name="Nusskern D.R."/>
            <person name="Shue B.C."/>
            <person name="Zheng X.H."/>
            <person name="Zhong F."/>
            <person name="Delcher A.L."/>
            <person name="Huson D.H."/>
            <person name="Kravitz S.A."/>
            <person name="Mouchard L."/>
            <person name="Reinert K."/>
            <person name="Remington K.A."/>
            <person name="Clark A.G."/>
            <person name="Waterman M.S."/>
            <person name="Eichler E.E."/>
            <person name="Adams M.D."/>
            <person name="Hunkapiller M.W."/>
            <person name="Myers E.W."/>
            <person name="Venter J.C."/>
        </authorList>
    </citation>
    <scope>NUCLEOTIDE SEQUENCE [LARGE SCALE GENOMIC DNA]</scope>
</reference>
<reference key="5">
    <citation type="journal article" date="2004" name="Genome Res.">
        <title>The status, quality, and expansion of the NIH full-length cDNA project: the Mammalian Gene Collection (MGC).</title>
        <authorList>
            <consortium name="The MGC Project Team"/>
        </authorList>
    </citation>
    <scope>NUCLEOTIDE SEQUENCE [LARGE SCALE MRNA] (ISOFORMS 1 AND 2)</scope>
    <source>
        <tissue>Brain</tissue>
        <tissue>Hypothalamus</tissue>
    </source>
</reference>
<reference key="6">
    <citation type="journal article" date="1997" name="Genome Res.">
        <title>Large-scale concatenation cDNA sequencing.</title>
        <authorList>
            <person name="Yu W."/>
            <person name="Andersson B."/>
            <person name="Worley K.C."/>
            <person name="Muzny D.M."/>
            <person name="Ding Y."/>
            <person name="Liu W."/>
            <person name="Ricafrente J.Y."/>
            <person name="Wentland M.A."/>
            <person name="Lennon G."/>
            <person name="Gibbs R.A."/>
        </authorList>
    </citation>
    <scope>NUCLEOTIDE SEQUENCE [LARGE SCALE MRNA] OF 125-276 (ISOFORM 1)</scope>
    <source>
        <tissue>Brain</tissue>
    </source>
</reference>
<reference key="7">
    <citation type="journal article" date="2004" name="Hum. Mol. Genet.">
        <title>Human SCO1 and SCO2 have independent, cooperative functions in copper delivery to cytochrome c oxidase.</title>
        <authorList>
            <person name="Leary S.C."/>
            <person name="Kaufman B.A."/>
            <person name="Pellecchia G."/>
            <person name="Guercin G.H."/>
            <person name="Mattman A."/>
            <person name="Jaksch M."/>
            <person name="Shoubridge E.A."/>
        </authorList>
    </citation>
    <scope>SUBCELLULAR LOCATION</scope>
    <scope>TOPOLOGY</scope>
</reference>
<reference key="8">
    <citation type="journal article" date="2005" name="Mol. Pain">
        <title>Physical interaction and functional coupling between ACDP4 and the intracellular ion chaperone COX11, an implication of the role of ACDP4 in essential metal ion transport and homeostasis.</title>
        <authorList>
            <person name="Guo D."/>
            <person name="Ling J."/>
            <person name="Wang M.-H."/>
            <person name="She J.-X."/>
            <person name="Gu J."/>
            <person name="Wang C.-Y."/>
        </authorList>
    </citation>
    <scope>INTERACTION WITH CNNM4</scope>
</reference>
<reference key="9">
    <citation type="journal article" date="2015" name="Proteomics">
        <title>N-terminome analysis of the human mitochondrial proteome.</title>
        <authorList>
            <person name="Vaca Jacome A.S."/>
            <person name="Rabilloud T."/>
            <person name="Schaeffer-Reiss C."/>
            <person name="Rompais M."/>
            <person name="Ayoub D."/>
            <person name="Lane L."/>
            <person name="Bairoch A."/>
            <person name="Van Dorsselaer A."/>
            <person name="Carapito C."/>
        </authorList>
    </citation>
    <scope>IDENTIFICATION BY MASS SPECTROMETRY [LARGE SCALE ANALYSIS]</scope>
</reference>
<reference key="10">
    <citation type="journal article" date="2021" name="Neurosci. Lett.">
        <title>RANBP2 mutation causing autosomal dominant acute necrotizing encephalopathy attenuates its interaction with COX11.</title>
        <authorList>
            <person name="Shibata A."/>
            <person name="Kasai M."/>
            <person name="Hoshino A."/>
            <person name="Tanaka T."/>
            <person name="Mizuguchi M."/>
        </authorList>
    </citation>
    <scope>INTERACTION WITH RANBP2</scope>
</reference>
<reference key="11">
    <citation type="journal article" date="2022" name="Hum. Mutat.">
        <title>Biallelic pathogenic variants in COX11 are associated with an infantile-onset mitochondrial encephalopathy.</title>
        <authorList>
            <person name="Rius R."/>
            <person name="Bennett N.K."/>
            <person name="Bhattacharya K."/>
            <person name="Riley L.G."/>
            <person name="Yueksel Z."/>
            <person name="Formosa L.E."/>
            <person name="Compton A.G."/>
            <person name="Dale R.C."/>
            <person name="Cowley M.J."/>
            <person name="Gayevskiy V."/>
            <person name="Al Tala S.M."/>
            <person name="Almehery A.A."/>
            <person name="Ryan M.T."/>
            <person name="Thorburn D.R."/>
            <person name="Nakamura K."/>
            <person name="Christodoulou J."/>
        </authorList>
    </citation>
    <scope>INVOLVEMENT IN MC4DN23</scope>
    <scope>VARIANT MC4DN23 PRO-244</scope>
</reference>
<keyword id="KW-0025">Alternative splicing</keyword>
<keyword id="KW-0186">Copper</keyword>
<keyword id="KW-0225">Disease variant</keyword>
<keyword id="KW-0472">Membrane</keyword>
<keyword id="KW-0496">Mitochondrion</keyword>
<keyword id="KW-0999">Mitochondrion inner membrane</keyword>
<keyword id="KW-1274">Primary mitochondrial disease</keyword>
<keyword id="KW-1267">Proteomics identification</keyword>
<keyword id="KW-1185">Reference proteome</keyword>
<keyword id="KW-0809">Transit peptide</keyword>
<keyword id="KW-0812">Transmembrane</keyword>
<keyword id="KW-1133">Transmembrane helix</keyword>
<gene>
    <name type="primary">COX11</name>
</gene>
<feature type="transit peptide" description="Mitochondrion" evidence="2">
    <location>
        <begin position="1"/>
        <end status="unknown"/>
    </location>
</feature>
<feature type="chain" id="PRO_0000006080" description="Cytochrome c oxidase assembly protein COX11, mitochondrial">
    <location>
        <begin status="unknown"/>
        <end position="276"/>
    </location>
</feature>
<feature type="topological domain" description="Mitochondrial matrix" evidence="11">
    <location>
        <begin status="unknown"/>
        <end position="95"/>
    </location>
</feature>
<feature type="transmembrane region" description="Helical" evidence="2">
    <location>
        <begin position="96"/>
        <end position="114"/>
    </location>
</feature>
<feature type="topological domain" description="Mitochondrial intermembrane" evidence="11">
    <location>
        <begin position="115"/>
        <end position="276"/>
    </location>
</feature>
<feature type="region of interest" description="Disordered" evidence="3">
    <location>
        <begin position="64"/>
        <end position="92"/>
    </location>
</feature>
<feature type="splice variant" id="VSP_046360" description="In isoform 2." evidence="9">
    <original>CFCFEEQRLNPQEEVDMPVFFYIDPEFAEDPRMIKVDLITLSYTFFEAKEGHKLPVPGYN</original>
    <variation>ASKLHRVYVLESWHL</variation>
    <location>
        <begin position="217"/>
        <end position="276"/>
    </location>
</feature>
<feature type="sequence variant" id="VAR_048831" description="In dbSNP:rs34080917.">
    <original>P</original>
    <variation>L</variation>
    <location>
        <position position="74"/>
    </location>
</feature>
<feature type="sequence variant" id="VAR_088428" description="In MC4DN23; uncertain significance; decreased respiration-derived ATP levels in patient cells." evidence="7">
    <original>A</original>
    <variation>P</variation>
    <location>
        <position position="244"/>
    </location>
</feature>
<feature type="sequence conflict" description="In Ref. 5; AAH05895." evidence="10" ref="5">
    <original>A</original>
    <variation>V</variation>
    <location>
        <position position="187"/>
    </location>
</feature>
<feature type="sequence conflict" description="In Ref. 4; BI600359." evidence="10" ref="4">
    <original>V</original>
    <variation>G</variation>
    <location sequence="Q9Y6N1-2">
        <position position="223"/>
    </location>
</feature>
<organism>
    <name type="scientific">Homo sapiens</name>
    <name type="common">Human</name>
    <dbReference type="NCBI Taxonomy" id="9606"/>
    <lineage>
        <taxon>Eukaryota</taxon>
        <taxon>Metazoa</taxon>
        <taxon>Chordata</taxon>
        <taxon>Craniata</taxon>
        <taxon>Vertebrata</taxon>
        <taxon>Euteleostomi</taxon>
        <taxon>Mammalia</taxon>
        <taxon>Eutheria</taxon>
        <taxon>Euarchontoglires</taxon>
        <taxon>Primates</taxon>
        <taxon>Haplorrhini</taxon>
        <taxon>Catarrhini</taxon>
        <taxon>Hominidae</taxon>
        <taxon>Homo</taxon>
    </lineage>
</organism>
<protein>
    <recommendedName>
        <fullName>Cytochrome c oxidase assembly protein COX11, mitochondrial</fullName>
    </recommendedName>
</protein>
<dbReference type="EMBL" id="AF044321">
    <property type="protein sequence ID" value="AAD08645.1"/>
    <property type="molecule type" value="mRNA"/>
</dbReference>
<dbReference type="EMBL" id="CR541837">
    <property type="protein sequence ID" value="CAG46636.1"/>
    <property type="molecule type" value="mRNA"/>
</dbReference>
<dbReference type="EMBL" id="AC007485">
    <property type="status" value="NOT_ANNOTATED_CDS"/>
    <property type="molecule type" value="Genomic_DNA"/>
</dbReference>
<dbReference type="EMBL" id="AC090824">
    <property type="status" value="NOT_ANNOTATED_CDS"/>
    <property type="molecule type" value="Genomic_DNA"/>
</dbReference>
<dbReference type="EMBL" id="CH471109">
    <property type="protein sequence ID" value="EAW94548.1"/>
    <property type="molecule type" value="Genomic_DNA"/>
</dbReference>
<dbReference type="EMBL" id="CH471109">
    <property type="protein sequence ID" value="EAW94550.1"/>
    <property type="molecule type" value="Genomic_DNA"/>
</dbReference>
<dbReference type="EMBL" id="BC005895">
    <property type="protein sequence ID" value="AAH05895.1"/>
    <property type="molecule type" value="mRNA"/>
</dbReference>
<dbReference type="EMBL" id="BI600359">
    <property type="status" value="NOT_ANNOTATED_CDS"/>
    <property type="molecule type" value="mRNA"/>
</dbReference>
<dbReference type="EMBL" id="U79270">
    <property type="protein sequence ID" value="AAB50214.1"/>
    <property type="molecule type" value="mRNA"/>
</dbReference>
<dbReference type="CCDS" id="CCDS11583.1">
    <molecule id="Q9Y6N1-1"/>
</dbReference>
<dbReference type="CCDS" id="CCDS58579.1">
    <molecule id="Q9Y6N1-2"/>
</dbReference>
<dbReference type="RefSeq" id="NP_001156334.1">
    <molecule id="Q9Y6N1-2"/>
    <property type="nucleotide sequence ID" value="NM_001162862.2"/>
</dbReference>
<dbReference type="RefSeq" id="NP_004366.1">
    <molecule id="Q9Y6N1-1"/>
    <property type="nucleotide sequence ID" value="NM_004375.5"/>
</dbReference>
<dbReference type="RefSeq" id="XP_011522644.1">
    <molecule id="Q9Y6N1-1"/>
    <property type="nucleotide sequence ID" value="XM_011524342.4"/>
</dbReference>
<dbReference type="RefSeq" id="XP_016879681.1">
    <molecule id="Q9Y6N1-1"/>
    <property type="nucleotide sequence ID" value="XM_017024192.3"/>
</dbReference>
<dbReference type="RefSeq" id="XP_016879682.1">
    <property type="nucleotide sequence ID" value="XM_017024193.1"/>
</dbReference>
<dbReference type="RefSeq" id="XP_016879683.1">
    <property type="nucleotide sequence ID" value="XM_017024194.1"/>
</dbReference>
<dbReference type="RefSeq" id="XP_016879684.1">
    <property type="nucleotide sequence ID" value="XM_017024195.1"/>
</dbReference>
<dbReference type="RefSeq" id="XP_016879685.1">
    <molecule id="Q9Y6N1-2"/>
    <property type="nucleotide sequence ID" value="XM_017024196.3"/>
</dbReference>
<dbReference type="RefSeq" id="XP_024306351.1">
    <molecule id="Q9Y6N1-2"/>
    <property type="nucleotide sequence ID" value="XM_024450583.2"/>
</dbReference>
<dbReference type="RefSeq" id="XP_024306352.1">
    <molecule id="Q9Y6N1-2"/>
    <property type="nucleotide sequence ID" value="XM_024450584.2"/>
</dbReference>
<dbReference type="RefSeq" id="XP_047291326.1">
    <molecule id="Q9Y6N1-1"/>
    <property type="nucleotide sequence ID" value="XM_047435370.1"/>
</dbReference>
<dbReference type="RefSeq" id="XP_047291328.1">
    <molecule id="Q9Y6N1-1"/>
    <property type="nucleotide sequence ID" value="XM_047435372.1"/>
</dbReference>
<dbReference type="RefSeq" id="XP_054171059.1">
    <molecule id="Q9Y6N1-1"/>
    <property type="nucleotide sequence ID" value="XM_054315084.1"/>
</dbReference>
<dbReference type="RefSeq" id="XP_054171060.1">
    <molecule id="Q9Y6N1-1"/>
    <property type="nucleotide sequence ID" value="XM_054315085.1"/>
</dbReference>
<dbReference type="RefSeq" id="XP_054171061.1">
    <molecule id="Q9Y6N1-2"/>
    <property type="nucleotide sequence ID" value="XM_054315086.1"/>
</dbReference>
<dbReference type="RefSeq" id="XP_054171062.1">
    <molecule id="Q9Y6N1-2"/>
    <property type="nucleotide sequence ID" value="XM_054315087.1"/>
</dbReference>
<dbReference type="RefSeq" id="XP_054171063.1">
    <molecule id="Q9Y6N1-2"/>
    <property type="nucleotide sequence ID" value="XM_054315088.1"/>
</dbReference>
<dbReference type="SMR" id="Q9Y6N1"/>
<dbReference type="BioGRID" id="107746">
    <property type="interactions" value="45"/>
</dbReference>
<dbReference type="FunCoup" id="Q9Y6N1">
    <property type="interactions" value="1297"/>
</dbReference>
<dbReference type="IntAct" id="Q9Y6N1">
    <property type="interactions" value="25"/>
</dbReference>
<dbReference type="STRING" id="9606.ENSP00000299335"/>
<dbReference type="GlyGen" id="Q9Y6N1">
    <property type="glycosylation" value="1 site, 1 O-linked glycan (1 site)"/>
</dbReference>
<dbReference type="iPTMnet" id="Q9Y6N1"/>
<dbReference type="PhosphoSitePlus" id="Q9Y6N1"/>
<dbReference type="SwissPalm" id="Q9Y6N1"/>
<dbReference type="BioMuta" id="COX11"/>
<dbReference type="DMDM" id="60416378"/>
<dbReference type="jPOST" id="Q9Y6N1"/>
<dbReference type="MassIVE" id="Q9Y6N1"/>
<dbReference type="PaxDb" id="9606-ENSP00000299335"/>
<dbReference type="PeptideAtlas" id="Q9Y6N1"/>
<dbReference type="ProteomicsDB" id="46815"/>
<dbReference type="ProteomicsDB" id="86740">
    <molecule id="Q9Y6N1-1"/>
</dbReference>
<dbReference type="Pumba" id="Q9Y6N1"/>
<dbReference type="Antibodypedia" id="30833">
    <property type="antibodies" value="136 antibodies from 26 providers"/>
</dbReference>
<dbReference type="DNASU" id="1353"/>
<dbReference type="Ensembl" id="ENST00000299335.8">
    <molecule id="Q9Y6N1-1"/>
    <property type="protein sequence ID" value="ENSP00000299335.3"/>
    <property type="gene ID" value="ENSG00000166260.13"/>
</dbReference>
<dbReference type="Ensembl" id="ENST00000572558.5">
    <molecule id="Q9Y6N1-2"/>
    <property type="protein sequence ID" value="ENSP00000459302.1"/>
    <property type="gene ID" value="ENSG00000166260.13"/>
</dbReference>
<dbReference type="Ensembl" id="ENST00000576370.5">
    <molecule id="Q9Y6N1-1"/>
    <property type="protein sequence ID" value="ENSP00000459901.1"/>
    <property type="gene ID" value="ENSG00000166260.13"/>
</dbReference>
<dbReference type="GeneID" id="1353"/>
<dbReference type="KEGG" id="hsa:1353"/>
<dbReference type="MANE-Select" id="ENST00000299335.8">
    <property type="protein sequence ID" value="ENSP00000299335.3"/>
    <property type="RefSeq nucleotide sequence ID" value="NM_004375.5"/>
    <property type="RefSeq protein sequence ID" value="NP_004366.1"/>
</dbReference>
<dbReference type="UCSC" id="uc010wng.2">
    <molecule id="Q9Y6N1-1"/>
    <property type="organism name" value="human"/>
</dbReference>
<dbReference type="AGR" id="HGNC:2261"/>
<dbReference type="CTD" id="1353"/>
<dbReference type="DisGeNET" id="1353"/>
<dbReference type="GeneCards" id="COX11"/>
<dbReference type="HGNC" id="HGNC:2261">
    <property type="gene designation" value="COX11"/>
</dbReference>
<dbReference type="HPA" id="ENSG00000166260">
    <property type="expression patterns" value="Low tissue specificity"/>
</dbReference>
<dbReference type="MalaCards" id="COX11"/>
<dbReference type="MIM" id="603648">
    <property type="type" value="gene"/>
</dbReference>
<dbReference type="MIM" id="620275">
    <property type="type" value="phenotype"/>
</dbReference>
<dbReference type="neXtProt" id="NX_Q9Y6N1"/>
<dbReference type="OpenTargets" id="ENSG00000166260"/>
<dbReference type="PharmGKB" id="PA26777"/>
<dbReference type="VEuPathDB" id="HostDB:ENSG00000166260"/>
<dbReference type="eggNOG" id="KOG2540">
    <property type="taxonomic scope" value="Eukaryota"/>
</dbReference>
<dbReference type="GeneTree" id="ENSGT00390000007512"/>
<dbReference type="HOGENOM" id="CLU_045000_1_0_1"/>
<dbReference type="InParanoid" id="Q9Y6N1"/>
<dbReference type="OMA" id="NKLECFC"/>
<dbReference type="OrthoDB" id="1704689at2759"/>
<dbReference type="PAN-GO" id="Q9Y6N1">
    <property type="GO annotations" value="1 GO annotation based on evolutionary models"/>
</dbReference>
<dbReference type="PhylomeDB" id="Q9Y6N1"/>
<dbReference type="TreeFam" id="TF105072"/>
<dbReference type="PathwayCommons" id="Q9Y6N1"/>
<dbReference type="Reactome" id="R-HSA-9864848">
    <property type="pathway name" value="Complex IV assembly"/>
</dbReference>
<dbReference type="SignaLink" id="Q9Y6N1"/>
<dbReference type="BioGRID-ORCS" id="1353">
    <property type="hits" value="250 hits in 1160 CRISPR screens"/>
</dbReference>
<dbReference type="ChiTaRS" id="COX11">
    <property type="organism name" value="human"/>
</dbReference>
<dbReference type="GenomeRNAi" id="1353"/>
<dbReference type="Pharos" id="Q9Y6N1">
    <property type="development level" value="Tbio"/>
</dbReference>
<dbReference type="PRO" id="PR:Q9Y6N1"/>
<dbReference type="Proteomes" id="UP000005640">
    <property type="component" value="Chromosome 17"/>
</dbReference>
<dbReference type="RNAct" id="Q9Y6N1">
    <property type="molecule type" value="protein"/>
</dbReference>
<dbReference type="Bgee" id="ENSG00000166260">
    <property type="expression patterns" value="Expressed in biceps brachii and 219 other cell types or tissues"/>
</dbReference>
<dbReference type="ExpressionAtlas" id="Q9Y6N1">
    <property type="expression patterns" value="baseline and differential"/>
</dbReference>
<dbReference type="GO" id="GO:0005743">
    <property type="term" value="C:mitochondrial inner membrane"/>
    <property type="evidence" value="ECO:0000314"/>
    <property type="project" value="UniProtKB"/>
</dbReference>
<dbReference type="GO" id="GO:0005739">
    <property type="term" value="C:mitochondrion"/>
    <property type="evidence" value="ECO:0000314"/>
    <property type="project" value="UniProtKB"/>
</dbReference>
<dbReference type="GO" id="GO:0032991">
    <property type="term" value="C:protein-containing complex"/>
    <property type="evidence" value="ECO:0000314"/>
    <property type="project" value="UniProtKB"/>
</dbReference>
<dbReference type="GO" id="GO:0005507">
    <property type="term" value="F:copper ion binding"/>
    <property type="evidence" value="ECO:0007669"/>
    <property type="project" value="InterPro"/>
</dbReference>
<dbReference type="GO" id="GO:0009055">
    <property type="term" value="F:electron transfer activity"/>
    <property type="evidence" value="ECO:0000304"/>
    <property type="project" value="UniProtKB"/>
</dbReference>
<dbReference type="GO" id="GO:0006754">
    <property type="term" value="P:ATP biosynthetic process"/>
    <property type="evidence" value="ECO:0000315"/>
    <property type="project" value="UniProtKB"/>
</dbReference>
<dbReference type="GO" id="GO:0030003">
    <property type="term" value="P:intracellular monoatomic cation homeostasis"/>
    <property type="evidence" value="ECO:0000314"/>
    <property type="project" value="UniProtKB"/>
</dbReference>
<dbReference type="FunFam" id="2.60.370.10:FF:000001">
    <property type="entry name" value="COX11 cytochrome c oxidase assembly homolog"/>
    <property type="match status" value="1"/>
</dbReference>
<dbReference type="Gene3D" id="2.60.370.10">
    <property type="entry name" value="Ctag/Cox11"/>
    <property type="match status" value="1"/>
</dbReference>
<dbReference type="HAMAP" id="MF_00155">
    <property type="entry name" value="CtaG"/>
    <property type="match status" value="1"/>
</dbReference>
<dbReference type="InterPro" id="IPR023471">
    <property type="entry name" value="CtaG/Cox11_dom_sf"/>
</dbReference>
<dbReference type="InterPro" id="IPR007533">
    <property type="entry name" value="Cyt_c_oxidase_assmbl_CtaG"/>
</dbReference>
<dbReference type="NCBIfam" id="NF003465">
    <property type="entry name" value="PRK05089.1"/>
    <property type="match status" value="1"/>
</dbReference>
<dbReference type="PANTHER" id="PTHR21320:SF3">
    <property type="entry name" value="CYTOCHROME C OXIDASE ASSEMBLY PROTEIN COX11, MITOCHONDRIAL-RELATED"/>
    <property type="match status" value="1"/>
</dbReference>
<dbReference type="PANTHER" id="PTHR21320">
    <property type="entry name" value="CYTOCHROME C OXIDASE ASSEMBLY PROTEIN COX11-RELATED"/>
    <property type="match status" value="1"/>
</dbReference>
<dbReference type="Pfam" id="PF04442">
    <property type="entry name" value="CtaG_Cox11"/>
    <property type="match status" value="1"/>
</dbReference>
<dbReference type="SUPFAM" id="SSF110111">
    <property type="entry name" value="Ctag/Cox11"/>
    <property type="match status" value="1"/>
</dbReference>
<accession>Q9Y6N1</accession>
<accession>D3DTY5</accession>
<accession>I3L220</accession>
<accession>Q6FHB7</accession>
<accession>Q9BRX0</accession>
<accession>Q9UME8</accession>